<organism>
    <name type="scientific">Desulfitobacterium hafniense (strain Y51)</name>
    <dbReference type="NCBI Taxonomy" id="138119"/>
    <lineage>
        <taxon>Bacteria</taxon>
        <taxon>Bacillati</taxon>
        <taxon>Bacillota</taxon>
        <taxon>Clostridia</taxon>
        <taxon>Eubacteriales</taxon>
        <taxon>Desulfitobacteriaceae</taxon>
        <taxon>Desulfitobacterium</taxon>
    </lineage>
</organism>
<feature type="chain" id="PRO_0000253104" description="Putative membrane protein insertion efficiency factor">
    <location>
        <begin position="1"/>
        <end position="69"/>
    </location>
</feature>
<proteinExistence type="inferred from homology"/>
<name>YIDD_DESHY</name>
<comment type="function">
    <text evidence="1">Could be involved in insertion of integral membrane proteins into the membrane.</text>
</comment>
<comment type="subcellular location">
    <subcellularLocation>
        <location evidence="1">Cell membrane</location>
        <topology evidence="1">Peripheral membrane protein</topology>
        <orientation evidence="1">Cytoplasmic side</orientation>
    </subcellularLocation>
</comment>
<comment type="similarity">
    <text evidence="1">Belongs to the UPF0161 family.</text>
</comment>
<protein>
    <recommendedName>
        <fullName evidence="1">Putative membrane protein insertion efficiency factor</fullName>
    </recommendedName>
</protein>
<dbReference type="EMBL" id="AP008230">
    <property type="protein sequence ID" value="BAE86847.1"/>
    <property type="molecule type" value="Genomic_DNA"/>
</dbReference>
<dbReference type="STRING" id="138119.DSY5058"/>
<dbReference type="KEGG" id="dsy:DSY5058"/>
<dbReference type="eggNOG" id="COG0759">
    <property type="taxonomic scope" value="Bacteria"/>
</dbReference>
<dbReference type="HOGENOM" id="CLU_144811_6_0_9"/>
<dbReference type="Proteomes" id="UP000001946">
    <property type="component" value="Chromosome"/>
</dbReference>
<dbReference type="GO" id="GO:0005886">
    <property type="term" value="C:plasma membrane"/>
    <property type="evidence" value="ECO:0007669"/>
    <property type="project" value="UniProtKB-SubCell"/>
</dbReference>
<dbReference type="HAMAP" id="MF_00386">
    <property type="entry name" value="UPF0161_YidD"/>
    <property type="match status" value="1"/>
</dbReference>
<dbReference type="InterPro" id="IPR002696">
    <property type="entry name" value="Membr_insert_effic_factor_YidD"/>
</dbReference>
<dbReference type="NCBIfam" id="TIGR00278">
    <property type="entry name" value="membrane protein insertion efficiency factor YidD"/>
    <property type="match status" value="1"/>
</dbReference>
<dbReference type="PANTHER" id="PTHR33383">
    <property type="entry name" value="MEMBRANE PROTEIN INSERTION EFFICIENCY FACTOR-RELATED"/>
    <property type="match status" value="1"/>
</dbReference>
<dbReference type="PANTHER" id="PTHR33383:SF1">
    <property type="entry name" value="MEMBRANE PROTEIN INSERTION EFFICIENCY FACTOR-RELATED"/>
    <property type="match status" value="1"/>
</dbReference>
<dbReference type="Pfam" id="PF01809">
    <property type="entry name" value="YidD"/>
    <property type="match status" value="1"/>
</dbReference>
<dbReference type="SMART" id="SM01234">
    <property type="entry name" value="Haemolytic"/>
    <property type="match status" value="1"/>
</dbReference>
<keyword id="KW-1003">Cell membrane</keyword>
<keyword id="KW-0472">Membrane</keyword>
<keyword id="KW-1185">Reference proteome</keyword>
<sequence length="69" mass="8123">MMKRLLIGMIRIYQRYISPLKRPSCRFYPTCSEYSIQAIQKYGVVKGCWKSLVRILKCHPFHPGGYDPV</sequence>
<gene>
    <name type="ordered locus">DSY5058</name>
</gene>
<evidence type="ECO:0000255" key="1">
    <source>
        <dbReference type="HAMAP-Rule" id="MF_00386"/>
    </source>
</evidence>
<reference key="1">
    <citation type="journal article" date="2006" name="J. Bacteriol.">
        <title>Complete genome sequence of the dehalorespiring bacterium Desulfitobacterium hafniense Y51 and comparison with Dehalococcoides ethenogenes 195.</title>
        <authorList>
            <person name="Nonaka H."/>
            <person name="Keresztes G."/>
            <person name="Shinoda Y."/>
            <person name="Ikenaga Y."/>
            <person name="Abe M."/>
            <person name="Naito K."/>
            <person name="Inatomi K."/>
            <person name="Furukawa K."/>
            <person name="Inui M."/>
            <person name="Yukawa H."/>
        </authorList>
    </citation>
    <scope>NUCLEOTIDE SEQUENCE [LARGE SCALE GENOMIC DNA]</scope>
    <source>
        <strain>Y51</strain>
    </source>
</reference>
<accession>Q24M95</accession>